<keyword id="KW-0030">Aminoacyl-tRNA synthetase</keyword>
<keyword id="KW-0067">ATP-binding</keyword>
<keyword id="KW-0963">Cytoplasm</keyword>
<keyword id="KW-0436">Ligase</keyword>
<keyword id="KW-0547">Nucleotide-binding</keyword>
<keyword id="KW-0648">Protein biosynthesis</keyword>
<feature type="chain" id="PRO_1000203094" description="Arginine--tRNA ligase">
    <location>
        <begin position="1"/>
        <end position="597"/>
    </location>
</feature>
<feature type="short sequence motif" description="'HIGH' region">
    <location>
        <begin position="124"/>
        <end position="134"/>
    </location>
</feature>
<evidence type="ECO:0000255" key="1">
    <source>
        <dbReference type="HAMAP-Rule" id="MF_00123"/>
    </source>
</evidence>
<gene>
    <name evidence="1" type="primary">argS</name>
    <name type="ordered locus">EUBREC_2239</name>
</gene>
<protein>
    <recommendedName>
        <fullName evidence="1">Arginine--tRNA ligase</fullName>
        <ecNumber evidence="1">6.1.1.19</ecNumber>
    </recommendedName>
    <alternativeName>
        <fullName evidence="1">Arginyl-tRNA synthetase</fullName>
        <shortName evidence="1">ArgRS</shortName>
    </alternativeName>
</protein>
<sequence length="597" mass="66744">MKKLINLISEEVTKAFVSAGYDEKYGKVTLSNRPDLCEFQCNGAMAAAKEYKCAPFMISDKVAALLESDEMFESVESVKPGFLNIKMDTAFLAKYMNDMKDDEGRYGLEKAKKPLTIVVDYGGPNVAKPLHVGHLRSAVIGESVKRIAKFMGHNVIGDVHLGDWGLQMGLIITELRERKPDLVYFDESYTGEYPKEAPFTISELEDIYPTASGKSKSDESFKEAALLATKELQGGRRGYQALLSHIMNVSVTDLKRNYENLNVHFELWKGESDAQPYVPGMVEMMKEKGFAHMSEGALVVDVKEDTDTKEIPPCIILKSDGASLYSTTDLATLVMRMKENNPDRVIYLADARQSMHFIQVFRCARKTGIVPDTTELVHIGFGTMNGKDGKPFKTRDGGVMRLEYLLKEIDDEMLNKIKENQKEKENLNIDEAEAEQTAKTVALAAVKYGDLSNQASKDYIFDIDRFTSFEGNTGPYILYTIVRIKSILSKYEAKGGDISALKDAIMPAVNAGQKNLMLSLAKFNATIESAYEESAPHKICAYIYELANAFNGFYHDTKILSEENEELKKSYISLLVLTKEILEACIDMLGFSAPDRM</sequence>
<reference key="1">
    <citation type="journal article" date="2009" name="Proc. Natl. Acad. Sci. U.S.A.">
        <title>Characterizing a model human gut microbiota composed of members of its two dominant bacterial phyla.</title>
        <authorList>
            <person name="Mahowald M.A."/>
            <person name="Rey F.E."/>
            <person name="Seedorf H."/>
            <person name="Turnbaugh P.J."/>
            <person name="Fulton R.S."/>
            <person name="Wollam A."/>
            <person name="Shah N."/>
            <person name="Wang C."/>
            <person name="Magrini V."/>
            <person name="Wilson R.K."/>
            <person name="Cantarel B.L."/>
            <person name="Coutinho P.M."/>
            <person name="Henrissat B."/>
            <person name="Crock L.W."/>
            <person name="Russell A."/>
            <person name="Verberkmoes N.C."/>
            <person name="Hettich R.L."/>
            <person name="Gordon J.I."/>
        </authorList>
    </citation>
    <scope>NUCLEOTIDE SEQUENCE [LARGE SCALE GENOMIC DNA]</scope>
    <source>
        <strain>ATCC 33656 / DSM 3377 / JCM 17463 / KCTC 5835 / LMG 30912 / VPI 0990</strain>
    </source>
</reference>
<dbReference type="EC" id="6.1.1.19" evidence="1"/>
<dbReference type="EMBL" id="CP001107">
    <property type="protein sequence ID" value="ACR75978.1"/>
    <property type="molecule type" value="Genomic_DNA"/>
</dbReference>
<dbReference type="RefSeq" id="WP_012743073.1">
    <property type="nucleotide sequence ID" value="NC_012781.1"/>
</dbReference>
<dbReference type="SMR" id="C4ZD15"/>
<dbReference type="STRING" id="515619.EUBREC_2239"/>
<dbReference type="PaxDb" id="515619-EUBREC_2239"/>
<dbReference type="GeneID" id="86989013"/>
<dbReference type="KEGG" id="ere:EUBREC_2239"/>
<dbReference type="HOGENOM" id="CLU_006406_5_1_9"/>
<dbReference type="Proteomes" id="UP000001477">
    <property type="component" value="Chromosome"/>
</dbReference>
<dbReference type="GO" id="GO:0005737">
    <property type="term" value="C:cytoplasm"/>
    <property type="evidence" value="ECO:0007669"/>
    <property type="project" value="UniProtKB-SubCell"/>
</dbReference>
<dbReference type="GO" id="GO:0004814">
    <property type="term" value="F:arginine-tRNA ligase activity"/>
    <property type="evidence" value="ECO:0007669"/>
    <property type="project" value="UniProtKB-UniRule"/>
</dbReference>
<dbReference type="GO" id="GO:0005524">
    <property type="term" value="F:ATP binding"/>
    <property type="evidence" value="ECO:0007669"/>
    <property type="project" value="UniProtKB-UniRule"/>
</dbReference>
<dbReference type="GO" id="GO:0006420">
    <property type="term" value="P:arginyl-tRNA aminoacylation"/>
    <property type="evidence" value="ECO:0007669"/>
    <property type="project" value="UniProtKB-UniRule"/>
</dbReference>
<dbReference type="CDD" id="cd00671">
    <property type="entry name" value="ArgRS_core"/>
    <property type="match status" value="1"/>
</dbReference>
<dbReference type="FunFam" id="3.40.50.620:FF:000116">
    <property type="entry name" value="Arginine--tRNA ligase"/>
    <property type="match status" value="1"/>
</dbReference>
<dbReference type="Gene3D" id="3.30.1360.70">
    <property type="entry name" value="Arginyl tRNA synthetase N-terminal domain"/>
    <property type="match status" value="1"/>
</dbReference>
<dbReference type="Gene3D" id="3.40.50.620">
    <property type="entry name" value="HUPs"/>
    <property type="match status" value="1"/>
</dbReference>
<dbReference type="Gene3D" id="1.10.730.10">
    <property type="entry name" value="Isoleucyl-tRNA Synthetase, Domain 1"/>
    <property type="match status" value="1"/>
</dbReference>
<dbReference type="HAMAP" id="MF_00123">
    <property type="entry name" value="Arg_tRNA_synth"/>
    <property type="match status" value="1"/>
</dbReference>
<dbReference type="InterPro" id="IPR001412">
    <property type="entry name" value="aa-tRNA-synth_I_CS"/>
</dbReference>
<dbReference type="InterPro" id="IPR001278">
    <property type="entry name" value="Arg-tRNA-ligase"/>
</dbReference>
<dbReference type="InterPro" id="IPR005148">
    <property type="entry name" value="Arg-tRNA-synth_N"/>
</dbReference>
<dbReference type="InterPro" id="IPR036695">
    <property type="entry name" value="Arg-tRNA-synth_N_sf"/>
</dbReference>
<dbReference type="InterPro" id="IPR035684">
    <property type="entry name" value="ArgRS_core"/>
</dbReference>
<dbReference type="InterPro" id="IPR008909">
    <property type="entry name" value="DALR_anticod-bd"/>
</dbReference>
<dbReference type="InterPro" id="IPR014729">
    <property type="entry name" value="Rossmann-like_a/b/a_fold"/>
</dbReference>
<dbReference type="InterPro" id="IPR009080">
    <property type="entry name" value="tRNAsynth_Ia_anticodon-bd"/>
</dbReference>
<dbReference type="NCBIfam" id="TIGR00456">
    <property type="entry name" value="argS"/>
    <property type="match status" value="1"/>
</dbReference>
<dbReference type="PANTHER" id="PTHR11956:SF11">
    <property type="entry name" value="ARGININE--TRNA LIGASE, MITOCHONDRIAL-RELATED"/>
    <property type="match status" value="1"/>
</dbReference>
<dbReference type="PANTHER" id="PTHR11956">
    <property type="entry name" value="ARGINYL-TRNA SYNTHETASE"/>
    <property type="match status" value="1"/>
</dbReference>
<dbReference type="Pfam" id="PF03485">
    <property type="entry name" value="Arg_tRNA_synt_N"/>
    <property type="match status" value="1"/>
</dbReference>
<dbReference type="Pfam" id="PF05746">
    <property type="entry name" value="DALR_1"/>
    <property type="match status" value="1"/>
</dbReference>
<dbReference type="Pfam" id="PF00750">
    <property type="entry name" value="tRNA-synt_1d"/>
    <property type="match status" value="1"/>
</dbReference>
<dbReference type="PRINTS" id="PR01038">
    <property type="entry name" value="TRNASYNTHARG"/>
</dbReference>
<dbReference type="SMART" id="SM01016">
    <property type="entry name" value="Arg_tRNA_synt_N"/>
    <property type="match status" value="1"/>
</dbReference>
<dbReference type="SMART" id="SM00836">
    <property type="entry name" value="DALR_1"/>
    <property type="match status" value="1"/>
</dbReference>
<dbReference type="SUPFAM" id="SSF47323">
    <property type="entry name" value="Anticodon-binding domain of a subclass of class I aminoacyl-tRNA synthetases"/>
    <property type="match status" value="1"/>
</dbReference>
<dbReference type="SUPFAM" id="SSF55190">
    <property type="entry name" value="Arginyl-tRNA synthetase (ArgRS), N-terminal 'additional' domain"/>
    <property type="match status" value="1"/>
</dbReference>
<dbReference type="SUPFAM" id="SSF52374">
    <property type="entry name" value="Nucleotidylyl transferase"/>
    <property type="match status" value="1"/>
</dbReference>
<dbReference type="PROSITE" id="PS00178">
    <property type="entry name" value="AA_TRNA_LIGASE_I"/>
    <property type="match status" value="1"/>
</dbReference>
<proteinExistence type="inferred from homology"/>
<name>SYR_AGARV</name>
<organism>
    <name type="scientific">Agathobacter rectalis (strain ATCC 33656 / DSM 3377 / JCM 17463 / KCTC 5835 / VPI 0990)</name>
    <name type="common">Eubacterium rectale</name>
    <dbReference type="NCBI Taxonomy" id="515619"/>
    <lineage>
        <taxon>Bacteria</taxon>
        <taxon>Bacillati</taxon>
        <taxon>Bacillota</taxon>
        <taxon>Clostridia</taxon>
        <taxon>Lachnospirales</taxon>
        <taxon>Lachnospiraceae</taxon>
        <taxon>Agathobacter</taxon>
    </lineage>
</organism>
<comment type="catalytic activity">
    <reaction evidence="1">
        <text>tRNA(Arg) + L-arginine + ATP = L-arginyl-tRNA(Arg) + AMP + diphosphate</text>
        <dbReference type="Rhea" id="RHEA:20301"/>
        <dbReference type="Rhea" id="RHEA-COMP:9658"/>
        <dbReference type="Rhea" id="RHEA-COMP:9673"/>
        <dbReference type="ChEBI" id="CHEBI:30616"/>
        <dbReference type="ChEBI" id="CHEBI:32682"/>
        <dbReference type="ChEBI" id="CHEBI:33019"/>
        <dbReference type="ChEBI" id="CHEBI:78442"/>
        <dbReference type="ChEBI" id="CHEBI:78513"/>
        <dbReference type="ChEBI" id="CHEBI:456215"/>
        <dbReference type="EC" id="6.1.1.19"/>
    </reaction>
</comment>
<comment type="subunit">
    <text evidence="1">Monomer.</text>
</comment>
<comment type="subcellular location">
    <subcellularLocation>
        <location evidence="1">Cytoplasm</location>
    </subcellularLocation>
</comment>
<comment type="similarity">
    <text evidence="1">Belongs to the class-I aminoacyl-tRNA synthetase family.</text>
</comment>
<accession>C4ZD15</accession>